<feature type="chain" id="PRO_0000322755" description="LexA repressor">
    <location>
        <begin position="1"/>
        <end position="227"/>
    </location>
</feature>
<feature type="DNA-binding region" description="H-T-H motif" evidence="1">
    <location>
        <begin position="25"/>
        <end position="45"/>
    </location>
</feature>
<feature type="active site" description="For autocatalytic cleavage activity" evidence="1">
    <location>
        <position position="148"/>
    </location>
</feature>
<feature type="active site" description="For autocatalytic cleavage activity" evidence="1">
    <location>
        <position position="186"/>
    </location>
</feature>
<feature type="site" description="Cleavage; by autolysis" evidence="1">
    <location>
        <begin position="112"/>
        <end position="113"/>
    </location>
</feature>
<accession>A3PHK4</accession>
<reference key="1">
    <citation type="submission" date="2007-02" db="EMBL/GenBank/DDBJ databases">
        <title>Complete sequence of chromosome 1 of Rhodobacter sphaeroides ATCC 17029.</title>
        <authorList>
            <person name="Copeland A."/>
            <person name="Lucas S."/>
            <person name="Lapidus A."/>
            <person name="Barry K."/>
            <person name="Detter J.C."/>
            <person name="Glavina del Rio T."/>
            <person name="Hammon N."/>
            <person name="Israni S."/>
            <person name="Dalin E."/>
            <person name="Tice H."/>
            <person name="Pitluck S."/>
            <person name="Kiss H."/>
            <person name="Brettin T."/>
            <person name="Bruce D."/>
            <person name="Han C."/>
            <person name="Tapia R."/>
            <person name="Gilna P."/>
            <person name="Schmutz J."/>
            <person name="Larimer F."/>
            <person name="Land M."/>
            <person name="Hauser L."/>
            <person name="Kyrpides N."/>
            <person name="Mikhailova N."/>
            <person name="Richardson P."/>
            <person name="Mackenzie C."/>
            <person name="Choudhary M."/>
            <person name="Donohue T.J."/>
            <person name="Kaplan S."/>
        </authorList>
    </citation>
    <scope>NUCLEOTIDE SEQUENCE [LARGE SCALE GENOMIC DNA]</scope>
    <source>
        <strain>ATCC 17029 / ATH 2.4.9</strain>
    </source>
</reference>
<keyword id="KW-0068">Autocatalytic cleavage</keyword>
<keyword id="KW-0227">DNA damage</keyword>
<keyword id="KW-0234">DNA repair</keyword>
<keyword id="KW-0235">DNA replication</keyword>
<keyword id="KW-0238">DNA-binding</keyword>
<keyword id="KW-0378">Hydrolase</keyword>
<keyword id="KW-0678">Repressor</keyword>
<keyword id="KW-0742">SOS response</keyword>
<keyword id="KW-0804">Transcription</keyword>
<keyword id="KW-0805">Transcription regulation</keyword>
<gene>
    <name evidence="1" type="primary">lexA</name>
    <name type="ordered locus">Rsph17029_0707</name>
</gene>
<name>LEXA_CERS1</name>
<evidence type="ECO:0000255" key="1">
    <source>
        <dbReference type="HAMAP-Rule" id="MF_00015"/>
    </source>
</evidence>
<organism>
    <name type="scientific">Cereibacter sphaeroides (strain ATCC 17029 / ATH 2.4.9)</name>
    <name type="common">Rhodobacter sphaeroides</name>
    <dbReference type="NCBI Taxonomy" id="349101"/>
    <lineage>
        <taxon>Bacteria</taxon>
        <taxon>Pseudomonadati</taxon>
        <taxon>Pseudomonadota</taxon>
        <taxon>Alphaproteobacteria</taxon>
        <taxon>Rhodobacterales</taxon>
        <taxon>Paracoccaceae</taxon>
        <taxon>Cereibacter</taxon>
    </lineage>
</organism>
<protein>
    <recommendedName>
        <fullName evidence="1">LexA repressor</fullName>
        <ecNumber evidence="1">3.4.21.88</ecNumber>
    </recommendedName>
</protein>
<sequence>MTRKQMELLDFIKTRMDRDGVPPSFDEMKDALDLRSKSGIHRLITALEERGFIRRLAHRARAIEIVKLPEAMERAGFSARAAKAAAAPLPKGAVTVETAGALDLPLMGRIAAGLPIEAINGGPQSVTVPGMMLSGRGQHYALEVKGDSMIAAGINDGDIVVIREQQTADNGDIVVALVADHEATLKRYRRRGGMIALEPANDSYETQVYPEQMVKVQGRLVGLIRSY</sequence>
<dbReference type="EC" id="3.4.21.88" evidence="1"/>
<dbReference type="EMBL" id="CP000577">
    <property type="protein sequence ID" value="ABN75820.1"/>
    <property type="molecule type" value="Genomic_DNA"/>
</dbReference>
<dbReference type="SMR" id="A3PHK4"/>
<dbReference type="MEROPS" id="S24.001"/>
<dbReference type="KEGG" id="rsh:Rsph17029_0707"/>
<dbReference type="HOGENOM" id="CLU_066192_45_2_5"/>
<dbReference type="GO" id="GO:0003677">
    <property type="term" value="F:DNA binding"/>
    <property type="evidence" value="ECO:0007669"/>
    <property type="project" value="UniProtKB-UniRule"/>
</dbReference>
<dbReference type="GO" id="GO:0004252">
    <property type="term" value="F:serine-type endopeptidase activity"/>
    <property type="evidence" value="ECO:0007669"/>
    <property type="project" value="UniProtKB-UniRule"/>
</dbReference>
<dbReference type="GO" id="GO:0006281">
    <property type="term" value="P:DNA repair"/>
    <property type="evidence" value="ECO:0007669"/>
    <property type="project" value="UniProtKB-UniRule"/>
</dbReference>
<dbReference type="GO" id="GO:0006260">
    <property type="term" value="P:DNA replication"/>
    <property type="evidence" value="ECO:0007669"/>
    <property type="project" value="UniProtKB-UniRule"/>
</dbReference>
<dbReference type="GO" id="GO:0045892">
    <property type="term" value="P:negative regulation of DNA-templated transcription"/>
    <property type="evidence" value="ECO:0007669"/>
    <property type="project" value="UniProtKB-UniRule"/>
</dbReference>
<dbReference type="GO" id="GO:0006508">
    <property type="term" value="P:proteolysis"/>
    <property type="evidence" value="ECO:0007669"/>
    <property type="project" value="InterPro"/>
</dbReference>
<dbReference type="GO" id="GO:0009432">
    <property type="term" value="P:SOS response"/>
    <property type="evidence" value="ECO:0007669"/>
    <property type="project" value="UniProtKB-UniRule"/>
</dbReference>
<dbReference type="CDD" id="cd06529">
    <property type="entry name" value="S24_LexA-like"/>
    <property type="match status" value="1"/>
</dbReference>
<dbReference type="FunFam" id="2.10.109.10:FF:000001">
    <property type="entry name" value="LexA repressor"/>
    <property type="match status" value="1"/>
</dbReference>
<dbReference type="Gene3D" id="2.10.109.10">
    <property type="entry name" value="Umud Fragment, subunit A"/>
    <property type="match status" value="1"/>
</dbReference>
<dbReference type="Gene3D" id="1.10.10.10">
    <property type="entry name" value="Winged helix-like DNA-binding domain superfamily/Winged helix DNA-binding domain"/>
    <property type="match status" value="1"/>
</dbReference>
<dbReference type="HAMAP" id="MF_00015">
    <property type="entry name" value="LexA"/>
    <property type="match status" value="1"/>
</dbReference>
<dbReference type="InterPro" id="IPR006200">
    <property type="entry name" value="LexA"/>
</dbReference>
<dbReference type="InterPro" id="IPR039418">
    <property type="entry name" value="LexA-like"/>
</dbReference>
<dbReference type="InterPro" id="IPR036286">
    <property type="entry name" value="LexA/Signal_pep-like_sf"/>
</dbReference>
<dbReference type="InterPro" id="IPR006199">
    <property type="entry name" value="LexA_DNA-bd_dom"/>
</dbReference>
<dbReference type="InterPro" id="IPR050077">
    <property type="entry name" value="LexA_repressor"/>
</dbReference>
<dbReference type="InterPro" id="IPR006197">
    <property type="entry name" value="Peptidase_S24_LexA"/>
</dbReference>
<dbReference type="InterPro" id="IPR015927">
    <property type="entry name" value="Peptidase_S24_S26A/B/C"/>
</dbReference>
<dbReference type="InterPro" id="IPR036388">
    <property type="entry name" value="WH-like_DNA-bd_sf"/>
</dbReference>
<dbReference type="InterPro" id="IPR036390">
    <property type="entry name" value="WH_DNA-bd_sf"/>
</dbReference>
<dbReference type="NCBIfam" id="TIGR00498">
    <property type="entry name" value="lexA"/>
    <property type="match status" value="1"/>
</dbReference>
<dbReference type="PANTHER" id="PTHR33516">
    <property type="entry name" value="LEXA REPRESSOR"/>
    <property type="match status" value="1"/>
</dbReference>
<dbReference type="PANTHER" id="PTHR33516:SF2">
    <property type="entry name" value="LEXA REPRESSOR-RELATED"/>
    <property type="match status" value="1"/>
</dbReference>
<dbReference type="Pfam" id="PF01726">
    <property type="entry name" value="LexA_DNA_bind"/>
    <property type="match status" value="1"/>
</dbReference>
<dbReference type="Pfam" id="PF00717">
    <property type="entry name" value="Peptidase_S24"/>
    <property type="match status" value="1"/>
</dbReference>
<dbReference type="PRINTS" id="PR00726">
    <property type="entry name" value="LEXASERPTASE"/>
</dbReference>
<dbReference type="SUPFAM" id="SSF51306">
    <property type="entry name" value="LexA/Signal peptidase"/>
    <property type="match status" value="1"/>
</dbReference>
<dbReference type="SUPFAM" id="SSF46785">
    <property type="entry name" value="Winged helix' DNA-binding domain"/>
    <property type="match status" value="1"/>
</dbReference>
<comment type="function">
    <text evidence="1">Represses a number of genes involved in the response to DNA damage (SOS response), including recA and lexA. In the presence of single-stranded DNA, RecA interacts with LexA causing an autocatalytic cleavage which disrupts the DNA-binding part of LexA, leading to derepression of the SOS regulon and eventually DNA repair.</text>
</comment>
<comment type="catalytic activity">
    <reaction evidence="1">
        <text>Hydrolysis of Ala-|-Gly bond in repressor LexA.</text>
        <dbReference type="EC" id="3.4.21.88"/>
    </reaction>
</comment>
<comment type="subunit">
    <text evidence="1">Homodimer.</text>
</comment>
<comment type="similarity">
    <text evidence="1">Belongs to the peptidase S24 family.</text>
</comment>
<proteinExistence type="inferred from homology"/>